<evidence type="ECO:0000250" key="1">
    <source>
        <dbReference type="UniProtKB" id="P9WGU9"/>
    </source>
</evidence>
<evidence type="ECO:0000255" key="2">
    <source>
        <dbReference type="PROSITE-ProRule" id="PRU00303"/>
    </source>
</evidence>
<evidence type="ECO:0000269" key="3">
    <source>
    </source>
</evidence>
<evidence type="ECO:0000303" key="4">
    <source>
    </source>
</evidence>
<evidence type="ECO:0000305" key="5"/>
<evidence type="ECO:0000305" key="6">
    <source>
    </source>
</evidence>
<evidence type="ECO:0000312" key="7">
    <source>
        <dbReference type="EMBL" id="EHI12999.1"/>
    </source>
</evidence>
<evidence type="ECO:0000312" key="8">
    <source>
        <dbReference type="Proteomes" id="UP000004915"/>
    </source>
</evidence>
<evidence type="ECO:0007744" key="9">
    <source>
        <dbReference type="PDB" id="7APE"/>
    </source>
</evidence>
<evidence type="ECO:0007829" key="10">
    <source>
        <dbReference type="PDB" id="7APE"/>
    </source>
</evidence>
<reference evidence="7 8" key="1">
    <citation type="submission" date="2011-11" db="EMBL/GenBank/DDBJ databases">
        <authorList>
            <consortium name="Tuberculosis Structural Genomics Consortium"/>
            <person name="Ioerger T.R."/>
        </authorList>
    </citation>
    <scope>NUCLEOTIDE SEQUENCE [LARGE SCALE GENOMIC DNA]</scope>
    <source>
        <strain evidence="8">ATCC 19527 / DSM 44167 / CIP 105390 / JCM 6362 / NCTC 10409 / 316</strain>
    </source>
</reference>
<reference evidence="9" key="2">
    <citation type="journal article" date="2021" name="J. Biol. Chem.">
        <title>Structural basis of trehalose recognition by the mycobacterial LpqY-SugABC transporter.</title>
        <authorList>
            <person name="Furze C.M."/>
            <person name="Delso I."/>
            <person name="Casal E."/>
            <person name="Guy C.S."/>
            <person name="Seddon C."/>
            <person name="Brown C.M."/>
            <person name="Parker H.L."/>
            <person name="Radhakrishnan A."/>
            <person name="Pacheco-Gomez R."/>
            <person name="Stansfeld P.J."/>
            <person name="Angulo J."/>
            <person name="Cameron A.D."/>
            <person name="Fullam E."/>
        </authorList>
    </citation>
    <scope>X-RAY CRYSTALLOGRAPHY (1.7 ANGSTROMS) IN COMPLEX WITH TREHALOSE</scope>
    <scope>FUNCTION</scope>
    <scope>SUBSTRATE SPECIFICITY</scope>
    <scope>SUBUNIT</scope>
    <scope>BIOTECHNOLOGY</scope>
    <scope>DISULFIDE BOND</scope>
    <scope>MUTAGENESIS OF ASN-45; GLU-46; GLN-79; ASP-100; ASN-154; GLU-261; TRP-279; LEU-355 AND ARG-424</scope>
    <scope>CIRCULAR DICHROISM ANALYSIS</scope>
    <source>
        <strain evidence="4">ATCC 19527 / DSM 44167 / CIP 105390 / JCM 6362 / NCTC 10409 / 316</strain>
    </source>
</reference>
<proteinExistence type="evidence at protein level"/>
<keyword id="KW-0002">3D-structure</keyword>
<keyword id="KW-0997">Cell inner membrane</keyword>
<keyword id="KW-1003">Cell membrane</keyword>
<keyword id="KW-1015">Disulfide bond</keyword>
<keyword id="KW-0449">Lipoprotein</keyword>
<keyword id="KW-0472">Membrane</keyword>
<keyword id="KW-0564">Palmitate</keyword>
<keyword id="KW-1185">Reference proteome</keyword>
<keyword id="KW-0732">Signal</keyword>
<keyword id="KW-0762">Sugar transport</keyword>
<keyword id="KW-0813">Transport</keyword>
<sequence length="471" mass="50958">MDGRQVVRARRWCATAAVALMTASTVAACGSDSGEIVISYYTPANEAATFTAVAQRCNAELGGRFRIEQRSLPREADAQRLQLARRLTGNDRSLDVMALDVVWTAEFAEAGWALPLSEDPAGLAEADATTNTLPGPLETAKWNGELYAAPITTNTQLLWYRADLMDEPPATWDEMLSEAARLHAQGGPSWIAVQGKQYEGLVVWFNTLLESAGGQVLSDDGQRVTLTDTPEHRAATVKALEIIKAVATAPGADPSITQTDENTARLALEQGRAALEVNWPYVLPSLLENAIKGGVGFLPLNENPALRGSINDVGTFAPTDEQFDLALNASKEVFGFARYPGVRPDEPARVTLGGLNLAVASTTRHKAEAFEAVRCLRNEENQRLTSIEGGLPAVRTSLYDDPQFQAKYPQYEIIRDQLINAAVRPATPVYQAMSTRMSATLAPISQIDPERTADELAEQVQQAIDGKGLIP</sequence>
<accession>G7CES0</accession>
<feature type="signal peptide" evidence="2">
    <location>
        <begin position="1"/>
        <end position="28"/>
    </location>
</feature>
<feature type="chain" id="PRO_0000457716" description="Trehalose-binding lipoprotein LpqY">
    <location>
        <begin position="29"/>
        <end position="471"/>
    </location>
</feature>
<feature type="binding site" evidence="3 9">
    <location>
        <position position="45"/>
    </location>
    <ligand>
        <name>alpha,alpha-trehalose</name>
        <dbReference type="ChEBI" id="CHEBI:16551"/>
    </ligand>
</feature>
<feature type="binding site" evidence="3 9">
    <location>
        <position position="46"/>
    </location>
    <ligand>
        <name>alpha,alpha-trehalose</name>
        <dbReference type="ChEBI" id="CHEBI:16551"/>
    </ligand>
</feature>
<feature type="binding site" evidence="3 9">
    <location>
        <position position="79"/>
    </location>
    <ligand>
        <name>alpha,alpha-trehalose</name>
        <dbReference type="ChEBI" id="CHEBI:16551"/>
    </ligand>
</feature>
<feature type="binding site" evidence="3 9">
    <location>
        <position position="100"/>
    </location>
    <ligand>
        <name>alpha,alpha-trehalose</name>
        <dbReference type="ChEBI" id="CHEBI:16551"/>
    </ligand>
</feature>
<feature type="binding site" evidence="3 9">
    <location>
        <position position="154"/>
    </location>
    <ligand>
        <name>alpha,alpha-trehalose</name>
        <dbReference type="ChEBI" id="CHEBI:16551"/>
    </ligand>
</feature>
<feature type="binding site" evidence="3 9">
    <location>
        <position position="198"/>
    </location>
    <ligand>
        <name>alpha,alpha-trehalose</name>
        <dbReference type="ChEBI" id="CHEBI:16551"/>
    </ligand>
</feature>
<feature type="binding site" evidence="3 9">
    <location>
        <position position="279"/>
    </location>
    <ligand>
        <name>alpha,alpha-trehalose</name>
        <dbReference type="ChEBI" id="CHEBI:16551"/>
    </ligand>
</feature>
<feature type="binding site" evidence="3 9">
    <location>
        <position position="281"/>
    </location>
    <ligand>
        <name>alpha,alpha-trehalose</name>
        <dbReference type="ChEBI" id="CHEBI:16551"/>
    </ligand>
</feature>
<feature type="binding site" evidence="3 9">
    <location>
        <position position="354"/>
    </location>
    <ligand>
        <name>alpha,alpha-trehalose</name>
        <dbReference type="ChEBI" id="CHEBI:16551"/>
    </ligand>
</feature>
<feature type="binding site" evidence="3 9">
    <location>
        <position position="424"/>
    </location>
    <ligand>
        <name>alpha,alpha-trehalose</name>
        <dbReference type="ChEBI" id="CHEBI:16551"/>
    </ligand>
</feature>
<feature type="lipid moiety-binding region" description="N-palmitoyl cysteine" evidence="2">
    <location>
        <position position="29"/>
    </location>
</feature>
<feature type="lipid moiety-binding region" description="S-diacylglycerol cysteine" evidence="2">
    <location>
        <position position="29"/>
    </location>
</feature>
<feature type="disulfide bond" evidence="3 9">
    <location>
        <begin position="57"/>
        <end position="375"/>
    </location>
</feature>
<feature type="mutagenesis site" description="About 3-fold increase in constant dissociation (Kd) value of trehalose compared to wild-type." evidence="3">
    <original>N</original>
    <variation>A</variation>
    <location>
        <position position="45"/>
    </location>
</feature>
<feature type="mutagenesis site" description="Increased trehalose-binding; when associated with D-46." evidence="3">
    <original>N</original>
    <variation>T</variation>
    <location>
        <position position="45"/>
    </location>
</feature>
<feature type="mutagenesis site" description="About 3-fold increase in constant dissociation (Kd) value of trehalose compared to wild-type." evidence="3">
    <original>E</original>
    <variation>A</variation>
    <location>
        <position position="46"/>
    </location>
</feature>
<feature type="mutagenesis site" description="Increased trehalose-binding; when associated with T-45." evidence="3">
    <original>E</original>
    <variation>D</variation>
    <location>
        <position position="46"/>
    </location>
</feature>
<feature type="mutagenesis site" description="About 10-fold increase in constant dissociation (Kd) value of trehalose compared to wild-type." evidence="3">
    <original>Q</original>
    <variation>A</variation>
    <location>
        <position position="79"/>
    </location>
</feature>
<feature type="mutagenesis site" description="Structurally unstable." evidence="3">
    <original>D</original>
    <variation>A</variation>
    <location>
        <position position="100"/>
    </location>
</feature>
<feature type="mutagenesis site" description="About 100-fold increase in constant dissociation (Kd) value of trehalose compared to wild-type." evidence="3">
    <original>N</original>
    <variation>A</variation>
    <location>
        <position position="154"/>
    </location>
</feature>
<feature type="mutagenesis site" description="Loss of trehalose-binding." evidence="3">
    <original>E</original>
    <variation>A</variation>
    <location>
        <position position="261"/>
    </location>
</feature>
<feature type="mutagenesis site" description="Loss of trehalose-binding." evidence="3">
    <original>W</original>
    <variation>A</variation>
    <location>
        <position position="279"/>
    </location>
</feature>
<feature type="mutagenesis site" description="About 13-fold increase in constant dissociation (Kd) value of trehalose compared to wild-type." evidence="3">
    <original>L</original>
    <variation>A</variation>
    <location>
        <position position="355"/>
    </location>
</feature>
<feature type="mutagenesis site" description="Loss of trehalose-binding." evidence="3">
    <original>R</original>
    <variation>A</variation>
    <location>
        <position position="424"/>
    </location>
</feature>
<feature type="strand" evidence="10">
    <location>
        <begin position="36"/>
        <end position="43"/>
    </location>
</feature>
<feature type="helix" evidence="10">
    <location>
        <begin position="44"/>
        <end position="46"/>
    </location>
</feature>
<feature type="helix" evidence="10">
    <location>
        <begin position="47"/>
        <end position="60"/>
    </location>
</feature>
<feature type="turn" evidence="10">
    <location>
        <begin position="61"/>
        <end position="63"/>
    </location>
</feature>
<feature type="strand" evidence="10">
    <location>
        <begin position="64"/>
        <end position="72"/>
    </location>
</feature>
<feature type="helix" evidence="10">
    <location>
        <begin position="76"/>
        <end position="88"/>
    </location>
</feature>
<feature type="strand" evidence="10">
    <location>
        <begin position="96"/>
        <end position="100"/>
    </location>
</feature>
<feature type="helix" evidence="10">
    <location>
        <begin position="104"/>
        <end position="109"/>
    </location>
</feature>
<feature type="helix" evidence="10">
    <location>
        <begin position="116"/>
        <end position="118"/>
    </location>
</feature>
<feature type="helix" evidence="10">
    <location>
        <begin position="124"/>
        <end position="129"/>
    </location>
</feature>
<feature type="helix" evidence="10">
    <location>
        <begin position="134"/>
        <end position="139"/>
    </location>
</feature>
<feature type="strand" evidence="10">
    <location>
        <begin position="145"/>
        <end position="147"/>
    </location>
</feature>
<feature type="strand" evidence="10">
    <location>
        <begin position="149"/>
        <end position="154"/>
    </location>
</feature>
<feature type="strand" evidence="10">
    <location>
        <begin position="157"/>
        <end position="160"/>
    </location>
</feature>
<feature type="turn" evidence="10">
    <location>
        <begin position="162"/>
        <end position="164"/>
    </location>
</feature>
<feature type="helix" evidence="10">
    <location>
        <begin position="172"/>
        <end position="184"/>
    </location>
</feature>
<feature type="strand" evidence="10">
    <location>
        <begin position="189"/>
        <end position="192"/>
    </location>
</feature>
<feature type="strand" evidence="10">
    <location>
        <begin position="196"/>
        <end position="198"/>
    </location>
</feature>
<feature type="helix" evidence="10">
    <location>
        <begin position="199"/>
        <end position="211"/>
    </location>
</feature>
<feature type="strand" evidence="10">
    <location>
        <begin position="221"/>
        <end position="224"/>
    </location>
</feature>
<feature type="strand" evidence="10">
    <location>
        <begin position="226"/>
        <end position="229"/>
    </location>
</feature>
<feature type="helix" evidence="10">
    <location>
        <begin position="230"/>
        <end position="247"/>
    </location>
</feature>
<feature type="helix" evidence="10">
    <location>
        <begin position="256"/>
        <end position="258"/>
    </location>
</feature>
<feature type="helix" evidence="10">
    <location>
        <begin position="261"/>
        <end position="269"/>
    </location>
</feature>
<feature type="strand" evidence="10">
    <location>
        <begin position="272"/>
        <end position="278"/>
    </location>
</feature>
<feature type="helix" evidence="10">
    <location>
        <begin position="282"/>
        <end position="291"/>
    </location>
</feature>
<feature type="helix" evidence="10">
    <location>
        <begin position="300"/>
        <end position="302"/>
    </location>
</feature>
<feature type="helix" evidence="10">
    <location>
        <begin position="304"/>
        <end position="306"/>
    </location>
</feature>
<feature type="helix" evidence="10">
    <location>
        <begin position="320"/>
        <end position="330"/>
    </location>
</feature>
<feature type="turn" evidence="10">
    <location>
        <begin position="331"/>
        <end position="333"/>
    </location>
</feature>
<feature type="strand" evidence="10">
    <location>
        <begin position="335"/>
        <end position="337"/>
    </location>
</feature>
<feature type="strand" evidence="10">
    <location>
        <begin position="341"/>
        <end position="343"/>
    </location>
</feature>
<feature type="strand" evidence="10">
    <location>
        <begin position="353"/>
        <end position="360"/>
    </location>
</feature>
<feature type="helix" evidence="10">
    <location>
        <begin position="366"/>
        <end position="376"/>
    </location>
</feature>
<feature type="helix" evidence="10">
    <location>
        <begin position="379"/>
        <end position="389"/>
    </location>
</feature>
<feature type="helix" evidence="10">
    <location>
        <begin position="396"/>
        <end position="400"/>
    </location>
</feature>
<feature type="helix" evidence="10">
    <location>
        <begin position="402"/>
        <end position="407"/>
    </location>
</feature>
<feature type="helix" evidence="10">
    <location>
        <begin position="411"/>
        <end position="418"/>
    </location>
</feature>
<feature type="helix" evidence="10">
    <location>
        <begin position="430"/>
        <end position="441"/>
    </location>
</feature>
<feature type="helix" evidence="10">
    <location>
        <begin position="444"/>
        <end position="446"/>
    </location>
</feature>
<feature type="helix" evidence="10">
    <location>
        <begin position="449"/>
        <end position="464"/>
    </location>
</feature>
<dbReference type="EMBL" id="AGVE01000042">
    <property type="protein sequence ID" value="EHI12999.1"/>
    <property type="status" value="ALT_INIT"/>
    <property type="molecule type" value="Genomic_DNA"/>
</dbReference>
<dbReference type="PDB" id="7APE">
    <property type="method" value="X-ray"/>
    <property type="resolution" value="1.70 A"/>
    <property type="chains" value="A/B=21-471"/>
</dbReference>
<dbReference type="PDBsum" id="7APE"/>
<dbReference type="SMR" id="G7CES0"/>
<dbReference type="PATRIC" id="fig|1078020.3.peg.1464"/>
<dbReference type="eggNOG" id="COG1653">
    <property type="taxonomic scope" value="Bacteria"/>
</dbReference>
<dbReference type="Proteomes" id="UP000004915">
    <property type="component" value="Unassembled WGS sequence"/>
</dbReference>
<dbReference type="GO" id="GO:0043190">
    <property type="term" value="C:ATP-binding cassette (ABC) transporter complex"/>
    <property type="evidence" value="ECO:0000250"/>
    <property type="project" value="UniProtKB"/>
</dbReference>
<dbReference type="GO" id="GO:0042597">
    <property type="term" value="C:periplasmic space"/>
    <property type="evidence" value="ECO:0000250"/>
    <property type="project" value="UniProtKB"/>
</dbReference>
<dbReference type="GO" id="GO:0015574">
    <property type="term" value="F:trehalose transmembrane transporter activity"/>
    <property type="evidence" value="ECO:0000250"/>
    <property type="project" value="UniProtKB"/>
</dbReference>
<dbReference type="CDD" id="cd14750">
    <property type="entry name" value="PBP2_TMBP"/>
    <property type="match status" value="1"/>
</dbReference>
<dbReference type="Gene3D" id="3.40.190.10">
    <property type="entry name" value="Periplasmic binding protein-like II"/>
    <property type="match status" value="4"/>
</dbReference>
<dbReference type="InterPro" id="IPR050490">
    <property type="entry name" value="Bact_solute-bd_prot1"/>
</dbReference>
<dbReference type="InterPro" id="IPR006059">
    <property type="entry name" value="SBP"/>
</dbReference>
<dbReference type="PANTHER" id="PTHR43649:SF34">
    <property type="entry name" value="ABC TRANSPORTER PERIPLASMIC-BINDING PROTEIN YCJN-RELATED"/>
    <property type="match status" value="1"/>
</dbReference>
<dbReference type="PANTHER" id="PTHR43649">
    <property type="entry name" value="ARABINOSE-BINDING PROTEIN-RELATED"/>
    <property type="match status" value="1"/>
</dbReference>
<dbReference type="Pfam" id="PF01547">
    <property type="entry name" value="SBP_bac_1"/>
    <property type="match status" value="1"/>
</dbReference>
<dbReference type="SUPFAM" id="SSF53850">
    <property type="entry name" value="Periplasmic binding protein-like II"/>
    <property type="match status" value="1"/>
</dbReference>
<dbReference type="PROSITE" id="PS51257">
    <property type="entry name" value="PROKAR_LIPOPROTEIN"/>
    <property type="match status" value="1"/>
</dbReference>
<name>LPQY_MYCT3</name>
<gene>
    <name evidence="4" type="primary">lpqY</name>
    <name evidence="7" type="ORF">KEK_07437</name>
</gene>
<comment type="function">
    <text evidence="1 3">Part of the ABC transporter complex LpqY-SugA-SugB-SugC, which is highly specific for uptake of trehalose. Involved in the recycling of extracellular trehalose released from trehalose-containing molecules synthesized by M.thermoresistibile. Trehalose uptake is essential for virulence (By similarity). Binds deuterated trehalose with similar high affinity to trehalose, trehalose analogs including galactotrehalose, 4-azido-4-deoxy-trehalose, 6-azido-6-deoxy-trehalose, 3-azido-3-deoxy-trehalose and mannotrehalose in the order of decreasing affinity, respectively, and 2-azido-2-deoxy-trehalose and kojibiose (alpha1,2-glycosidic bond) with very low affinity. Does not recognize single glucose, 6-amino-6-deoxy-trehalose, trehalose-6-phosphate, nigerose (alpha1,3-glycosidic bond), maltose (alpha1,4-glycosidic bond), isomaltose (alpha1,6-glycosidic bond) or glycerophosphocholine. Decreased recognition of alpha,beta-trehalose and almost no recognition of beta,beta-trehalose. Substrate specificity indicates a strict requirement for an alpha1,1-linked disaccharide (PubMed:33476646).</text>
</comment>
<comment type="subunit">
    <text evidence="1 3">Monomer (PubMed:33476646). The complex is composed of two ATP-binding proteins (SugC), two transmembrane proteins (SugA and SugB) and a solute-binding protein (LpqY) (By similarity).</text>
</comment>
<comment type="subcellular location">
    <subcellularLocation>
        <location evidence="5">Cell inner membrane</location>
        <topology evidence="2">Lipid-anchor</topology>
        <orientation evidence="1">Periplasmic side</orientation>
    </subcellularLocation>
</comment>
<comment type="biotechnology">
    <text evidence="6">The reported experimental results of this protein may help in designing antitubercular drugs and/or diagnostic tools.</text>
</comment>
<comment type="similarity">
    <text evidence="5">Belongs to the bacterial solute-binding protein 1 family.</text>
</comment>
<comment type="sequence caution" evidence="5">
    <conflict type="erroneous initiation">
        <sequence resource="EMBL-CDS" id="EHI12999"/>
    </conflict>
    <text>Truncated N-terminus.</text>
</comment>
<organism evidence="7 8">
    <name type="scientific">Mycolicibacterium thermoresistibile (strain ATCC 19527 / DSM 44167 / CIP 105390 / JCM 6362 / NCTC 10409 / 316)</name>
    <name type="common">Mycobacterium thermoresistibile</name>
    <dbReference type="NCBI Taxonomy" id="1078020"/>
    <lineage>
        <taxon>Bacteria</taxon>
        <taxon>Bacillati</taxon>
        <taxon>Actinomycetota</taxon>
        <taxon>Actinomycetes</taxon>
        <taxon>Mycobacteriales</taxon>
        <taxon>Mycobacteriaceae</taxon>
        <taxon>Mycolicibacterium</taxon>
    </lineage>
</organism>
<protein>
    <recommendedName>
        <fullName evidence="4">Trehalose-binding lipoprotein LpqY</fullName>
    </recommendedName>
    <alternativeName>
        <fullName evidence="7">Extracellular solute-binding protein</fullName>
    </alternativeName>
    <alternativeName>
        <fullName evidence="4">SugABC transporter substrate-binding protein LpqY</fullName>
        <shortName evidence="5">SugABC transporter SBP LpqY</shortName>
    </alternativeName>
</protein>